<dbReference type="EC" id="2.7.1.224" evidence="2"/>
<dbReference type="EMBL" id="AL111168">
    <property type="protein sequence ID" value="CAL35524.1"/>
    <property type="molecule type" value="Genomic_DNA"/>
</dbReference>
<dbReference type="PIR" id="G81286">
    <property type="entry name" value="G81286"/>
</dbReference>
<dbReference type="RefSeq" id="WP_002858462.1">
    <property type="nucleotide sequence ID" value="NZ_SZUC01000003.1"/>
</dbReference>
<dbReference type="SMR" id="Q0P8J9"/>
<dbReference type="STRING" id="192222.Cj1415c"/>
<dbReference type="PaxDb" id="192222-Cj1415c"/>
<dbReference type="EnsemblBacteria" id="CAL35524">
    <property type="protein sequence ID" value="CAL35524"/>
    <property type="gene ID" value="Cj1415c"/>
</dbReference>
<dbReference type="KEGG" id="cje:Cj1415c"/>
<dbReference type="PATRIC" id="fig|192222.6.peg.1396"/>
<dbReference type="eggNOG" id="COG0529">
    <property type="taxonomic scope" value="Bacteria"/>
</dbReference>
<dbReference type="HOGENOM" id="CLU_046932_2_3_7"/>
<dbReference type="OrthoDB" id="9804504at2"/>
<dbReference type="BRENDA" id="2.7.1.224">
    <property type="organism ID" value="16305"/>
</dbReference>
<dbReference type="SABIO-RK" id="Q0P8J9"/>
<dbReference type="UniPathway" id="UPA00934"/>
<dbReference type="Proteomes" id="UP000000799">
    <property type="component" value="Chromosome"/>
</dbReference>
<dbReference type="GO" id="GO:0005737">
    <property type="term" value="C:cytoplasm"/>
    <property type="evidence" value="ECO:0007669"/>
    <property type="project" value="TreeGrafter"/>
</dbReference>
<dbReference type="GO" id="GO:0004020">
    <property type="term" value="F:adenylylsulfate kinase activity"/>
    <property type="evidence" value="ECO:0007669"/>
    <property type="project" value="InterPro"/>
</dbReference>
<dbReference type="GO" id="GO:0005524">
    <property type="term" value="F:ATP binding"/>
    <property type="evidence" value="ECO:0007669"/>
    <property type="project" value="InterPro"/>
</dbReference>
<dbReference type="GO" id="GO:0004781">
    <property type="term" value="F:sulfate adenylyltransferase (ATP) activity"/>
    <property type="evidence" value="ECO:0007669"/>
    <property type="project" value="TreeGrafter"/>
</dbReference>
<dbReference type="GO" id="GO:0045227">
    <property type="term" value="P:capsule polysaccharide biosynthetic process"/>
    <property type="evidence" value="ECO:0007669"/>
    <property type="project" value="UniProtKB-UniPathway"/>
</dbReference>
<dbReference type="GO" id="GO:0010134">
    <property type="term" value="P:sulfate assimilation via adenylyl sulfate reduction"/>
    <property type="evidence" value="ECO:0007669"/>
    <property type="project" value="TreeGrafter"/>
</dbReference>
<dbReference type="GO" id="GO:0019379">
    <property type="term" value="P:sulfate assimilation, phosphoadenylyl sulfate reduction by phosphoadenylyl-sulfate reductase (thioredoxin)"/>
    <property type="evidence" value="ECO:0007669"/>
    <property type="project" value="TreeGrafter"/>
</dbReference>
<dbReference type="CDD" id="cd02027">
    <property type="entry name" value="APSK"/>
    <property type="match status" value="1"/>
</dbReference>
<dbReference type="Gene3D" id="3.40.50.300">
    <property type="entry name" value="P-loop containing nucleotide triphosphate hydrolases"/>
    <property type="match status" value="1"/>
</dbReference>
<dbReference type="InterPro" id="IPR002891">
    <property type="entry name" value="APS_kinase"/>
</dbReference>
<dbReference type="InterPro" id="IPR027417">
    <property type="entry name" value="P-loop_NTPase"/>
</dbReference>
<dbReference type="InterPro" id="IPR050512">
    <property type="entry name" value="Sulf_AdTrans/APS_kinase"/>
</dbReference>
<dbReference type="NCBIfam" id="NF004041">
    <property type="entry name" value="PRK05541.1"/>
    <property type="match status" value="1"/>
</dbReference>
<dbReference type="PANTHER" id="PTHR42700">
    <property type="entry name" value="SULFATE ADENYLYLTRANSFERASE"/>
    <property type="match status" value="1"/>
</dbReference>
<dbReference type="PANTHER" id="PTHR42700:SF1">
    <property type="entry name" value="SULFATE ADENYLYLTRANSFERASE"/>
    <property type="match status" value="1"/>
</dbReference>
<dbReference type="Pfam" id="PF01583">
    <property type="entry name" value="APS_kinase"/>
    <property type="match status" value="1"/>
</dbReference>
<dbReference type="PRINTS" id="PR01100">
    <property type="entry name" value="SHIKIMTKNASE"/>
</dbReference>
<dbReference type="SUPFAM" id="SSF52540">
    <property type="entry name" value="P-loop containing nucleoside triphosphate hydrolases"/>
    <property type="match status" value="1"/>
</dbReference>
<accession>Q0P8J9</accession>
<proteinExistence type="evidence at protein level"/>
<evidence type="ECO:0000269" key="1">
    <source>
    </source>
</evidence>
<evidence type="ECO:0000269" key="2">
    <source>
    </source>
</evidence>
<evidence type="ECO:0000303" key="3">
    <source>
    </source>
</evidence>
<evidence type="ECO:0000305" key="4"/>
<evidence type="ECO:0000312" key="5">
    <source>
        <dbReference type="EMBL" id="CAL35524.1"/>
    </source>
</evidence>
<organism>
    <name type="scientific">Campylobacter jejuni subsp. jejuni serotype O:2 (strain ATCC 700819 / NCTC 11168)</name>
    <dbReference type="NCBI Taxonomy" id="192222"/>
    <lineage>
        <taxon>Bacteria</taxon>
        <taxon>Pseudomonadati</taxon>
        <taxon>Campylobacterota</taxon>
        <taxon>Epsilonproteobacteria</taxon>
        <taxon>Campylobacterales</taxon>
        <taxon>Campylobacteraceae</taxon>
        <taxon>Campylobacter</taxon>
    </lineage>
</organism>
<comment type="function">
    <text evidence="1 2">Involved in the biosynthesis of the O-methyl phosphoramidate (MeOPN) group found on the capsular polysaccharide (CPS) of C.jejuni (PubMed:17675288). Catalyzes the ATP-dependent phosphorylation of cytidine diphosphoramidate (CDP-NH(2)) to form cytidine 3'-phosphate 5'-diphosphoramidate (PubMed:29578334). Can also use other substrates such as the corresponding adenine and uridine diphosphoramidate derivatives or cytidine diphosphoramidate analogs, with lower efficiency (PubMed:29578334).</text>
</comment>
<comment type="catalytic activity">
    <reaction evidence="2">
        <text>cytidine 5'-diphosphoramidate + ATP = cytidine 3'-phospho-5'-diphosphoramidate + ADP + H(+)</text>
        <dbReference type="Rhea" id="RHEA:57316"/>
        <dbReference type="ChEBI" id="CHEBI:15378"/>
        <dbReference type="ChEBI" id="CHEBI:30616"/>
        <dbReference type="ChEBI" id="CHEBI:141582"/>
        <dbReference type="ChEBI" id="CHEBI:141584"/>
        <dbReference type="ChEBI" id="CHEBI:456216"/>
        <dbReference type="EC" id="2.7.1.224"/>
    </reaction>
</comment>
<comment type="biophysicochemical properties">
    <kinetics>
        <KM evidence="2">0.11 mM for cytidine diphosphoramidate</KM>
        <KM evidence="2">1.5 mM for ATP</KM>
        <KM evidence="2">0.39 mM for 2'-deoxycytidine diphosphoramidate</KM>
        <KM evidence="2">4.2 mM for CDP</KM>
        <KM evidence="2">1.4 mM for CDP-methyl phosphate</KM>
        <KM evidence="2">0.8 mM for CDP-methyl phosphonate</KM>
        <KM evidence="2">21 mM for uridine diphosphoramidate</KM>
        <KM evidence="2">5.6 mM for adenosine diphosphoramidate</KM>
        <text evidence="2">kcat is 2.2 sec(-1) with cytidine diphosphoramidate as substrate. kcat is 2.2 sec(-1) with 2'-deoxycytidine diphosphoramidate as substrate. kcat is 0.64 sec(-1) with CDP as substrate. kcat is 0.65 sec(-1) with CDP-methyl phosphate as substrate. kcat is 1.4 sec(-1) with CDP-methyl phosphonate as substrate. kcat is 0.023 sec(-1) with uridine diphosphoramidate as substrate. kcat is 0.08 sec(-1) with adenosine diphosphoramidate as substrate.</text>
    </kinetics>
</comment>
<comment type="pathway">
    <text evidence="1">Capsule biogenesis; capsule polysaccharide biosynthesis.</text>
</comment>
<comment type="disruption phenotype">
    <text evidence="1">Mutant does not express the MeOPN CPS modification.</text>
</comment>
<comment type="similarity">
    <text evidence="4">Belongs to the APS kinase family.</text>
</comment>
<protein>
    <recommendedName>
        <fullName evidence="3">Cytidine diphosphoramidate kinase</fullName>
        <shortName evidence="3">CDK</shortName>
        <ecNumber evidence="2">2.7.1.224</ecNumber>
    </recommendedName>
</protein>
<feature type="chain" id="PRO_0000445427" description="Cytidine diphosphoramidate kinase">
    <location>
        <begin position="1"/>
        <end position="170"/>
    </location>
</feature>
<feature type="mutagenesis site" description="Decrease in activity." evidence="2">
    <original>S</original>
    <variation>A</variation>
    <location>
        <position position="85"/>
    </location>
</feature>
<reference key="1">
    <citation type="journal article" date="2000" name="Nature">
        <title>The genome sequence of the food-borne pathogen Campylobacter jejuni reveals hypervariable sequences.</title>
        <authorList>
            <person name="Parkhill J."/>
            <person name="Wren B.W."/>
            <person name="Mungall K.L."/>
            <person name="Ketley J.M."/>
            <person name="Churcher C.M."/>
            <person name="Basham D."/>
            <person name="Chillingworth T."/>
            <person name="Davies R.M."/>
            <person name="Feltwell T."/>
            <person name="Holroyd S."/>
            <person name="Jagels K."/>
            <person name="Karlyshev A.V."/>
            <person name="Moule S."/>
            <person name="Pallen M.J."/>
            <person name="Penn C.W."/>
            <person name="Quail M.A."/>
            <person name="Rajandream M.A."/>
            <person name="Rutherford K.M."/>
            <person name="van Vliet A.H.M."/>
            <person name="Whitehead S."/>
            <person name="Barrell B.G."/>
        </authorList>
    </citation>
    <scope>NUCLEOTIDE SEQUENCE [LARGE SCALE GENOMIC DNA]</scope>
    <source>
        <strain>ATCC 700819 / NCTC 11168</strain>
    </source>
</reference>
<reference key="2">
    <citation type="journal article" date="2007" name="J. Biol. Chem.">
        <title>Commonality and biosynthesis of the O-methyl phosphoramidate capsule modification in Campylobacter jejuni.</title>
        <authorList>
            <person name="McNally D.J."/>
            <person name="Lamoureux M.P."/>
            <person name="Karlyshev A.V."/>
            <person name="Fiori L.M."/>
            <person name="Li J."/>
            <person name="Thacker G."/>
            <person name="Coleman R.A."/>
            <person name="Khieu N.H."/>
            <person name="Wren B.W."/>
            <person name="Brisson J.R."/>
            <person name="Jarrell H.C."/>
            <person name="Szymanski C.M."/>
        </authorList>
    </citation>
    <scope>FUNCTION IN CAPSULE BIOSYNTHESIS</scope>
    <scope>PATHWAY</scope>
    <scope>DISRUPTION PHENOTYPE</scope>
    <source>
        <strain>ATCC 700819 / NCTC 11168</strain>
    </source>
</reference>
<reference key="3">
    <citation type="journal article" date="2018" name="Biochemistry">
        <title>Cytidine diphosphoramidate kinase: an enzyme required for the biosynthesis of the O-methyl phosphoramidate modification in the capsular polysaccharides of Campylobacter jejuni.</title>
        <authorList>
            <person name="Taylor Z.W."/>
            <person name="Raushel F.M."/>
        </authorList>
    </citation>
    <scope>FUNCTION</scope>
    <scope>CATALYTIC ACTIVITY</scope>
    <scope>BIOPHYSICOCHEMICAL PROPERTIES</scope>
    <scope>MUTAGENESIS OF SER-85</scope>
</reference>
<sequence length="170" mass="19884">MKNNPYIIWLTGLAGSGKTTIGQALYEKLKLKYKNLIYLDGDELREILGHYAYDRQGRIDMALKRAKFAKFLNDQGMMVIVTTISMFNEIYDYNRKQLKNYYEIYIECDMHELIQRDQKGLYTKALNKEIDNVVGVDIEFDKPEADLVINNSCRNNLEEKVELIIKKLAL</sequence>
<name>CDK_CAMJE</name>
<gene>
    <name evidence="5" type="ordered locus">Cj1415c</name>
</gene>
<keyword id="KW-0972">Capsule biogenesis/degradation</keyword>
<keyword id="KW-0418">Kinase</keyword>
<keyword id="KW-1185">Reference proteome</keyword>
<keyword id="KW-0808">Transferase</keyword>